<reference key="1">
    <citation type="submission" date="2007-07" db="EMBL/GenBank/DDBJ databases">
        <title>Complete sequence of Fervidobacterium nodosum Rt17-B1.</title>
        <authorList>
            <consortium name="US DOE Joint Genome Institute"/>
            <person name="Copeland A."/>
            <person name="Lucas S."/>
            <person name="Lapidus A."/>
            <person name="Barry K."/>
            <person name="Glavina del Rio T."/>
            <person name="Dalin E."/>
            <person name="Tice H."/>
            <person name="Pitluck S."/>
            <person name="Saunders E."/>
            <person name="Brettin T."/>
            <person name="Bruce D."/>
            <person name="Detter J.C."/>
            <person name="Han C."/>
            <person name="Schmutz J."/>
            <person name="Larimer F."/>
            <person name="Land M."/>
            <person name="Hauser L."/>
            <person name="Kyrpides N."/>
            <person name="Mikhailova N."/>
            <person name="Nelson K."/>
            <person name="Gogarten J.P."/>
            <person name="Noll K."/>
            <person name="Richardson P."/>
        </authorList>
    </citation>
    <scope>NUCLEOTIDE SEQUENCE [LARGE SCALE GENOMIC DNA]</scope>
    <source>
        <strain>ATCC 35602 / DSM 5306 / Rt17-B1</strain>
    </source>
</reference>
<proteinExistence type="inferred from homology"/>
<feature type="chain" id="PRO_0000356459" description="Large ribosomal subunit protein bL33">
    <location>
        <begin position="1"/>
        <end position="49"/>
    </location>
</feature>
<sequence>MRVQVGLKCEECGNRNYYTTKEKSKKDKLRLKKYCPKCNKHTFHTETKV</sequence>
<accession>A7HLC0</accession>
<comment type="similarity">
    <text evidence="1">Belongs to the bacterial ribosomal protein bL33 family.</text>
</comment>
<dbReference type="EMBL" id="CP000771">
    <property type="protein sequence ID" value="ABS60703.1"/>
    <property type="molecule type" value="Genomic_DNA"/>
</dbReference>
<dbReference type="RefSeq" id="WP_011994019.1">
    <property type="nucleotide sequence ID" value="NC_009718.1"/>
</dbReference>
<dbReference type="SMR" id="A7HLC0"/>
<dbReference type="STRING" id="381764.Fnod_0850"/>
<dbReference type="KEGG" id="fno:Fnod_0850"/>
<dbReference type="eggNOG" id="COG0267">
    <property type="taxonomic scope" value="Bacteria"/>
</dbReference>
<dbReference type="HOGENOM" id="CLU_190949_0_2_0"/>
<dbReference type="Proteomes" id="UP000002415">
    <property type="component" value="Chromosome"/>
</dbReference>
<dbReference type="GO" id="GO:0005737">
    <property type="term" value="C:cytoplasm"/>
    <property type="evidence" value="ECO:0007669"/>
    <property type="project" value="UniProtKB-ARBA"/>
</dbReference>
<dbReference type="GO" id="GO:1990904">
    <property type="term" value="C:ribonucleoprotein complex"/>
    <property type="evidence" value="ECO:0007669"/>
    <property type="project" value="UniProtKB-KW"/>
</dbReference>
<dbReference type="GO" id="GO:0005840">
    <property type="term" value="C:ribosome"/>
    <property type="evidence" value="ECO:0007669"/>
    <property type="project" value="UniProtKB-KW"/>
</dbReference>
<dbReference type="GO" id="GO:0003735">
    <property type="term" value="F:structural constituent of ribosome"/>
    <property type="evidence" value="ECO:0007669"/>
    <property type="project" value="InterPro"/>
</dbReference>
<dbReference type="GO" id="GO:0006412">
    <property type="term" value="P:translation"/>
    <property type="evidence" value="ECO:0007669"/>
    <property type="project" value="UniProtKB-UniRule"/>
</dbReference>
<dbReference type="Gene3D" id="2.20.28.120">
    <property type="entry name" value="Ribosomal protein L33"/>
    <property type="match status" value="1"/>
</dbReference>
<dbReference type="HAMAP" id="MF_00294">
    <property type="entry name" value="Ribosomal_bL33"/>
    <property type="match status" value="1"/>
</dbReference>
<dbReference type="InterPro" id="IPR001705">
    <property type="entry name" value="Ribosomal_bL33"/>
</dbReference>
<dbReference type="InterPro" id="IPR038584">
    <property type="entry name" value="Ribosomal_bL33_sf"/>
</dbReference>
<dbReference type="InterPro" id="IPR011332">
    <property type="entry name" value="Ribosomal_zn-bd"/>
</dbReference>
<dbReference type="NCBIfam" id="NF001764">
    <property type="entry name" value="PRK00504.1"/>
    <property type="match status" value="1"/>
</dbReference>
<dbReference type="NCBIfam" id="NF001860">
    <property type="entry name" value="PRK00595.1"/>
    <property type="match status" value="1"/>
</dbReference>
<dbReference type="NCBIfam" id="TIGR01023">
    <property type="entry name" value="rpmG_bact"/>
    <property type="match status" value="1"/>
</dbReference>
<dbReference type="PANTHER" id="PTHR43168">
    <property type="entry name" value="50S RIBOSOMAL PROTEIN L33, CHLOROPLASTIC"/>
    <property type="match status" value="1"/>
</dbReference>
<dbReference type="PANTHER" id="PTHR43168:SF6">
    <property type="entry name" value="LARGE RIBOSOMAL SUBUNIT PROTEIN BL33A"/>
    <property type="match status" value="1"/>
</dbReference>
<dbReference type="Pfam" id="PF00471">
    <property type="entry name" value="Ribosomal_L33"/>
    <property type="match status" value="1"/>
</dbReference>
<dbReference type="SUPFAM" id="SSF57829">
    <property type="entry name" value="Zn-binding ribosomal proteins"/>
    <property type="match status" value="1"/>
</dbReference>
<gene>
    <name evidence="1" type="primary">rpmG</name>
    <name type="ordered locus">Fnod_0850</name>
</gene>
<protein>
    <recommendedName>
        <fullName evidence="1">Large ribosomal subunit protein bL33</fullName>
    </recommendedName>
    <alternativeName>
        <fullName evidence="2">50S ribosomal protein L33</fullName>
    </alternativeName>
</protein>
<organism>
    <name type="scientific">Fervidobacterium nodosum (strain ATCC 35602 / DSM 5306 / Rt17-B1)</name>
    <dbReference type="NCBI Taxonomy" id="381764"/>
    <lineage>
        <taxon>Bacteria</taxon>
        <taxon>Thermotogati</taxon>
        <taxon>Thermotogota</taxon>
        <taxon>Thermotogae</taxon>
        <taxon>Thermotogales</taxon>
        <taxon>Fervidobacteriaceae</taxon>
        <taxon>Fervidobacterium</taxon>
    </lineage>
</organism>
<name>RL33_FERNB</name>
<evidence type="ECO:0000255" key="1">
    <source>
        <dbReference type="HAMAP-Rule" id="MF_00294"/>
    </source>
</evidence>
<evidence type="ECO:0000305" key="2"/>
<keyword id="KW-1185">Reference proteome</keyword>
<keyword id="KW-0687">Ribonucleoprotein</keyword>
<keyword id="KW-0689">Ribosomal protein</keyword>